<geneLocation type="chloroplast"/>
<proteinExistence type="inferred from homology"/>
<dbReference type="EMBL" id="AY660566">
    <property type="protein sequence ID" value="AAT80742.1"/>
    <property type="molecule type" value="Genomic_DNA"/>
</dbReference>
<dbReference type="RefSeq" id="YP_209546.1">
    <property type="nucleotide sequence ID" value="NC_006861.1"/>
</dbReference>
<dbReference type="SMR" id="Q5SCX4"/>
<dbReference type="GeneID" id="3283716"/>
<dbReference type="GO" id="GO:0009535">
    <property type="term" value="C:chloroplast thylakoid membrane"/>
    <property type="evidence" value="ECO:0007669"/>
    <property type="project" value="UniProtKB-SubCell"/>
</dbReference>
<dbReference type="GO" id="GO:0045259">
    <property type="term" value="C:proton-transporting ATP synthase complex"/>
    <property type="evidence" value="ECO:0007669"/>
    <property type="project" value="UniProtKB-KW"/>
</dbReference>
<dbReference type="GO" id="GO:0033177">
    <property type="term" value="C:proton-transporting two-sector ATPase complex, proton-transporting domain"/>
    <property type="evidence" value="ECO:0007669"/>
    <property type="project" value="InterPro"/>
</dbReference>
<dbReference type="GO" id="GO:0008289">
    <property type="term" value="F:lipid binding"/>
    <property type="evidence" value="ECO:0007669"/>
    <property type="project" value="UniProtKB-KW"/>
</dbReference>
<dbReference type="GO" id="GO:0046933">
    <property type="term" value="F:proton-transporting ATP synthase activity, rotational mechanism"/>
    <property type="evidence" value="ECO:0007669"/>
    <property type="project" value="UniProtKB-UniRule"/>
</dbReference>
<dbReference type="CDD" id="cd18183">
    <property type="entry name" value="ATP-synt_Fo_c_ATPH"/>
    <property type="match status" value="1"/>
</dbReference>
<dbReference type="FunFam" id="1.20.20.10:FF:000001">
    <property type="entry name" value="ATP synthase subunit c, chloroplastic"/>
    <property type="match status" value="1"/>
</dbReference>
<dbReference type="Gene3D" id="1.20.20.10">
    <property type="entry name" value="F1F0 ATP synthase subunit C"/>
    <property type="match status" value="1"/>
</dbReference>
<dbReference type="HAMAP" id="MF_01396">
    <property type="entry name" value="ATP_synth_c_bact"/>
    <property type="match status" value="1"/>
</dbReference>
<dbReference type="InterPro" id="IPR005953">
    <property type="entry name" value="ATP_synth_csu_bac/chlpt"/>
</dbReference>
<dbReference type="InterPro" id="IPR000454">
    <property type="entry name" value="ATP_synth_F0_csu"/>
</dbReference>
<dbReference type="InterPro" id="IPR020537">
    <property type="entry name" value="ATP_synth_F0_csu_DDCD_BS"/>
</dbReference>
<dbReference type="InterPro" id="IPR038662">
    <property type="entry name" value="ATP_synth_F0_csu_sf"/>
</dbReference>
<dbReference type="InterPro" id="IPR002379">
    <property type="entry name" value="ATPase_proteolipid_c-like_dom"/>
</dbReference>
<dbReference type="InterPro" id="IPR035921">
    <property type="entry name" value="F/V-ATP_Csub_sf"/>
</dbReference>
<dbReference type="NCBIfam" id="TIGR01260">
    <property type="entry name" value="ATP_synt_c"/>
    <property type="match status" value="1"/>
</dbReference>
<dbReference type="NCBIfam" id="NF005608">
    <property type="entry name" value="PRK07354.1"/>
    <property type="match status" value="1"/>
</dbReference>
<dbReference type="PANTHER" id="PTHR10031">
    <property type="entry name" value="ATP SYNTHASE LIPID-BINDING PROTEIN, MITOCHONDRIAL"/>
    <property type="match status" value="1"/>
</dbReference>
<dbReference type="PANTHER" id="PTHR10031:SF0">
    <property type="entry name" value="ATPASE PROTEIN 9"/>
    <property type="match status" value="1"/>
</dbReference>
<dbReference type="Pfam" id="PF00137">
    <property type="entry name" value="ATP-synt_C"/>
    <property type="match status" value="1"/>
</dbReference>
<dbReference type="PRINTS" id="PR00124">
    <property type="entry name" value="ATPASEC"/>
</dbReference>
<dbReference type="SUPFAM" id="SSF81333">
    <property type="entry name" value="F1F0 ATP synthase subunit C"/>
    <property type="match status" value="1"/>
</dbReference>
<dbReference type="PROSITE" id="PS00605">
    <property type="entry name" value="ATPASE_C"/>
    <property type="match status" value="1"/>
</dbReference>
<name>ATPH_HUPLU</name>
<comment type="function">
    <text evidence="1">F(1)F(0) ATP synthase produces ATP from ADP in the presence of a proton or sodium gradient. F-type ATPases consist of two structural domains, F(1) containing the extramembraneous catalytic core and F(0) containing the membrane proton channel, linked together by a central stalk and a peripheral stalk. During catalysis, ATP synthesis in the catalytic domain of F(1) is coupled via a rotary mechanism of the central stalk subunits to proton translocation.</text>
</comment>
<comment type="function">
    <text evidence="1">Key component of the F(0) channel; it plays a direct role in translocation across the membrane. A homomeric c-ring of between 10-14 subunits forms the central stalk rotor element with the F(1) delta and epsilon subunits.</text>
</comment>
<comment type="subunit">
    <text evidence="1">F-type ATPases have 2 components, F(1) - the catalytic core - and F(0) - the membrane proton channel. F(1) has five subunits: alpha(3), beta(3), gamma(1), delta(1), epsilon(1). F(0) has four main subunits: a(1), b(1), b'(1) and c(10-14). The alpha and beta chains form an alternating ring which encloses part of the gamma chain. F(1) is attached to F(0) by a central stalk formed by the gamma and epsilon chains, while a peripheral stalk is formed by the delta, b and b' chains.</text>
</comment>
<comment type="subcellular location">
    <subcellularLocation>
        <location evidence="1">Plastid</location>
        <location evidence="1">Chloroplast thylakoid membrane</location>
        <topology evidence="1">Multi-pass membrane protein</topology>
    </subcellularLocation>
</comment>
<comment type="miscellaneous">
    <text>In plastids the F-type ATPase is also known as CF(1)CF(0).</text>
</comment>
<comment type="similarity">
    <text evidence="1">Belongs to the ATPase C chain family.</text>
</comment>
<evidence type="ECO:0000255" key="1">
    <source>
        <dbReference type="HAMAP-Rule" id="MF_01396"/>
    </source>
</evidence>
<keyword id="KW-0066">ATP synthesis</keyword>
<keyword id="KW-0138">CF(0)</keyword>
<keyword id="KW-0150">Chloroplast</keyword>
<keyword id="KW-0375">Hydrogen ion transport</keyword>
<keyword id="KW-0406">Ion transport</keyword>
<keyword id="KW-0446">Lipid-binding</keyword>
<keyword id="KW-0472">Membrane</keyword>
<keyword id="KW-0934">Plastid</keyword>
<keyword id="KW-0793">Thylakoid</keyword>
<keyword id="KW-0812">Transmembrane</keyword>
<keyword id="KW-1133">Transmembrane helix</keyword>
<keyword id="KW-0813">Transport</keyword>
<reference key="1">
    <citation type="journal article" date="2005" name="Gene">
        <title>The first complete chloroplast genome sequence of a lycophyte, Huperzia lucidula (Lycopodiaceae).</title>
        <authorList>
            <person name="Wolf P.G."/>
            <person name="Karol K.G."/>
            <person name="Mandoli D.F."/>
            <person name="Kuehl J.V."/>
            <person name="Arumuganathan K."/>
            <person name="Ellis M.W."/>
            <person name="Mishler B.D."/>
            <person name="Kelch D.G."/>
            <person name="Olmstead R.G."/>
            <person name="Boore J.L."/>
        </authorList>
    </citation>
    <scope>NUCLEOTIDE SEQUENCE [LARGE SCALE GENOMIC DNA]</scope>
</reference>
<gene>
    <name evidence="1" type="primary">atpH</name>
</gene>
<organism>
    <name type="scientific">Huperzia lucidula</name>
    <name type="common">Shining clubmoss</name>
    <name type="synonym">Lycopodium lucidulum</name>
    <dbReference type="NCBI Taxonomy" id="37429"/>
    <lineage>
        <taxon>Eukaryota</taxon>
        <taxon>Viridiplantae</taxon>
        <taxon>Streptophyta</taxon>
        <taxon>Embryophyta</taxon>
        <taxon>Tracheophyta</taxon>
        <taxon>Lycopodiopsida</taxon>
        <taxon>Lycopodiales</taxon>
        <taxon>Lycopodiaceae</taxon>
        <taxon>Huperzioideae</taxon>
        <taxon>Huperzia</taxon>
    </lineage>
</organism>
<sequence length="81" mass="7974">MNPLISAASVIAAGLAVGLASIGPGVGQGTAAGQAVEGIARQPEAEGKIRGTLLLSLAFMEALTIYGLVVALALPFANPFV</sequence>
<feature type="chain" id="PRO_0000362923" description="ATP synthase subunit c, chloroplastic">
    <location>
        <begin position="1"/>
        <end position="81"/>
    </location>
</feature>
<feature type="transmembrane region" description="Helical" evidence="1">
    <location>
        <begin position="3"/>
        <end position="23"/>
    </location>
</feature>
<feature type="transmembrane region" description="Helical" evidence="1">
    <location>
        <begin position="53"/>
        <end position="73"/>
    </location>
</feature>
<feature type="site" description="Reversibly protonated during proton transport" evidence="1">
    <location>
        <position position="61"/>
    </location>
</feature>
<protein>
    <recommendedName>
        <fullName evidence="1">ATP synthase subunit c, chloroplastic</fullName>
    </recommendedName>
    <alternativeName>
        <fullName evidence="1">ATP synthase F(0) sector subunit c</fullName>
    </alternativeName>
    <alternativeName>
        <fullName evidence="1">ATPase subunit III</fullName>
    </alternativeName>
    <alternativeName>
        <fullName evidence="1">F-type ATPase subunit c</fullName>
        <shortName evidence="1">F-ATPase subunit c</shortName>
    </alternativeName>
    <alternativeName>
        <fullName evidence="1">Lipid-binding protein</fullName>
    </alternativeName>
</protein>
<accession>Q5SCX4</accession>